<reference key="1">
    <citation type="journal article" date="1992" name="Proc. Natl. Acad. Sci. U.S.A.">
        <title>Diversification of the Wnt gene family on the ancestral lineage of vertebrates.</title>
        <authorList>
            <person name="Sidow A."/>
        </authorList>
    </citation>
    <scope>NUCLEOTIDE SEQUENCE [GENOMIC DNA]</scope>
</reference>
<evidence type="ECO:0000250" key="1">
    <source>
        <dbReference type="UniProtKB" id="P27467"/>
    </source>
</evidence>
<evidence type="ECO:0000250" key="2">
    <source>
        <dbReference type="UniProtKB" id="P28026"/>
    </source>
</evidence>
<evidence type="ECO:0000250" key="3">
    <source>
        <dbReference type="UniProtKB" id="P43446"/>
    </source>
</evidence>
<evidence type="ECO:0000250" key="4">
    <source>
        <dbReference type="UniProtKB" id="P56704"/>
    </source>
</evidence>
<evidence type="ECO:0000250" key="5">
    <source>
        <dbReference type="UniProtKB" id="Q9GZT5"/>
    </source>
</evidence>
<evidence type="ECO:0000255" key="6"/>
<evidence type="ECO:0000305" key="7"/>
<organism>
    <name type="scientific">Plethodon jordani</name>
    <name type="common">Red-cheeked salamander</name>
    <dbReference type="NCBI Taxonomy" id="8336"/>
    <lineage>
        <taxon>Eukaryota</taxon>
        <taxon>Metazoa</taxon>
        <taxon>Chordata</taxon>
        <taxon>Craniata</taxon>
        <taxon>Vertebrata</taxon>
        <taxon>Euteleostomi</taxon>
        <taxon>Amphibia</taxon>
        <taxon>Batrachia</taxon>
        <taxon>Caudata</taxon>
        <taxon>Salamandroidea</taxon>
        <taxon>Plethodontidae</taxon>
        <taxon>Plethodontinae</taxon>
        <taxon>Plethodon</taxon>
    </lineage>
</organism>
<dbReference type="EMBL" id="M91288">
    <property type="protein sequence ID" value="AAA49456.1"/>
    <property type="molecule type" value="Genomic_DNA"/>
</dbReference>
<dbReference type="PIR" id="A45387">
    <property type="entry name" value="A45387"/>
</dbReference>
<dbReference type="SMR" id="P28131"/>
<dbReference type="GlyCosmos" id="P28131">
    <property type="glycosylation" value="1 site, No reported glycans"/>
</dbReference>
<dbReference type="GO" id="GO:0005615">
    <property type="term" value="C:extracellular space"/>
    <property type="evidence" value="ECO:0007669"/>
    <property type="project" value="TreeGrafter"/>
</dbReference>
<dbReference type="GO" id="GO:0005125">
    <property type="term" value="F:cytokine activity"/>
    <property type="evidence" value="ECO:0007669"/>
    <property type="project" value="TreeGrafter"/>
</dbReference>
<dbReference type="GO" id="GO:0005109">
    <property type="term" value="F:frizzled binding"/>
    <property type="evidence" value="ECO:0007669"/>
    <property type="project" value="TreeGrafter"/>
</dbReference>
<dbReference type="GO" id="GO:0060070">
    <property type="term" value="P:canonical Wnt signaling pathway"/>
    <property type="evidence" value="ECO:0007669"/>
    <property type="project" value="TreeGrafter"/>
</dbReference>
<dbReference type="GO" id="GO:0045165">
    <property type="term" value="P:cell fate commitment"/>
    <property type="evidence" value="ECO:0007669"/>
    <property type="project" value="TreeGrafter"/>
</dbReference>
<dbReference type="GO" id="GO:0030182">
    <property type="term" value="P:neuron differentiation"/>
    <property type="evidence" value="ECO:0007669"/>
    <property type="project" value="TreeGrafter"/>
</dbReference>
<dbReference type="Gene3D" id="3.30.2460.20">
    <property type="match status" value="1"/>
</dbReference>
<dbReference type="InterPro" id="IPR005817">
    <property type="entry name" value="Wnt"/>
</dbReference>
<dbReference type="InterPro" id="IPR043158">
    <property type="entry name" value="Wnt_C"/>
</dbReference>
<dbReference type="PANTHER" id="PTHR12027:SF89">
    <property type="entry name" value="PROTEIN WNT-10A"/>
    <property type="match status" value="1"/>
</dbReference>
<dbReference type="PANTHER" id="PTHR12027">
    <property type="entry name" value="WNT RELATED"/>
    <property type="match status" value="1"/>
</dbReference>
<dbReference type="Pfam" id="PF00110">
    <property type="entry name" value="wnt"/>
    <property type="match status" value="1"/>
</dbReference>
<dbReference type="SMART" id="SM00097">
    <property type="entry name" value="WNT1"/>
    <property type="match status" value="1"/>
</dbReference>
<gene>
    <name type="primary">WNT-10A</name>
</gene>
<sequence>SGSCQLKTCWQVTPEFRVVGNLLKERFYGATLIKPHNRNTGQLDHSHIPHRRRTSINSLVYFEKSPDFCEREPQLDSTGTQGRICNKTSPGMDNCESLCCGRGHNILRQTPSERCNCKF</sequence>
<accession>P28131</accession>
<name>WN10A_PLEJO</name>
<keyword id="KW-0217">Developmental protein</keyword>
<keyword id="KW-1015">Disulfide bond</keyword>
<keyword id="KW-0272">Extracellular matrix</keyword>
<keyword id="KW-0325">Glycoprotein</keyword>
<keyword id="KW-0449">Lipoprotein</keyword>
<keyword id="KW-0964">Secreted</keyword>
<keyword id="KW-0879">Wnt signaling pathway</keyword>
<proteinExistence type="inferred from homology"/>
<protein>
    <recommendedName>
        <fullName>Protein Wnt-10a</fullName>
    </recommendedName>
</protein>
<comment type="function">
    <text evidence="3">Ligand for members of the frizzled family of seven transmembrane receptors. Required for normal tooth development. Regulates the expression of genes involved in tooth development.</text>
</comment>
<comment type="subcellular location">
    <subcellularLocation>
        <location evidence="5">Secreted</location>
        <location evidence="5">Extracellular space</location>
        <location evidence="5">Extracellular matrix</location>
    </subcellularLocation>
    <subcellularLocation>
        <location evidence="5">Secreted</location>
    </subcellularLocation>
</comment>
<comment type="PTM">
    <text evidence="1 4">Palmitoleoylation is required for efficient binding to frizzled receptors. Depalmitoleoylation leads to Wnt signaling pathway inhibition.</text>
</comment>
<comment type="similarity">
    <text evidence="7">Belongs to the Wnt family.</text>
</comment>
<feature type="chain" id="PRO_0000200665" description="Protein Wnt-10a">
    <location>
        <begin position="1" status="less than"/>
        <end position="119" status="greater than"/>
    </location>
</feature>
<feature type="lipid moiety-binding region" description="O-palmitoleoyl serine; by PORCN" evidence="4">
    <location>
        <position position="1"/>
    </location>
</feature>
<feature type="glycosylation site" description="N-linked (GlcNAc...) asparagine" evidence="6">
    <location>
        <position position="86"/>
    </location>
</feature>
<feature type="disulfide bond" evidence="2">
    <location>
        <begin position="85"/>
        <end position="100"/>
    </location>
</feature>
<feature type="non-terminal residue">
    <location>
        <position position="1"/>
    </location>
</feature>
<feature type="non-terminal residue">
    <location>
        <position position="119"/>
    </location>
</feature>